<dbReference type="EMBL" id="AL021889">
    <property type="protein sequence ID" value="CAA17142.1"/>
    <property type="status" value="ALT_SEQ"/>
    <property type="molecule type" value="Genomic_DNA"/>
</dbReference>
<dbReference type="EMBL" id="AL161547">
    <property type="protein sequence ID" value="CAB78801.1"/>
    <property type="status" value="ALT_SEQ"/>
    <property type="molecule type" value="Genomic_DNA"/>
</dbReference>
<dbReference type="EMBL" id="CP002687">
    <property type="protein sequence ID" value="AEE83975.1"/>
    <property type="status" value="ALT_SEQ"/>
    <property type="molecule type" value="Genomic_DNA"/>
</dbReference>
<dbReference type="EMBL" id="CP002687">
    <property type="protein sequence ID" value="ANM66644.1"/>
    <property type="molecule type" value="Genomic_DNA"/>
</dbReference>
<dbReference type="PIR" id="T05085">
    <property type="entry name" value="T05085"/>
</dbReference>
<dbReference type="RefSeq" id="NP_001328528.1">
    <property type="nucleotide sequence ID" value="NM_001341250.1"/>
</dbReference>
<dbReference type="RefSeq" id="NP_193533.5">
    <property type="nucleotide sequence ID" value="NM_117909.5"/>
</dbReference>
<dbReference type="SMR" id="O49698"/>
<dbReference type="PaxDb" id="3702-AT4G17990.1"/>
<dbReference type="EnsemblPlants" id="AT4G17990.2">
    <property type="protein sequence ID" value="AT4G17990.2"/>
    <property type="gene ID" value="AT4G17990"/>
</dbReference>
<dbReference type="GeneID" id="827524"/>
<dbReference type="Gramene" id="AT4G17990.2">
    <property type="protein sequence ID" value="AT4G17990.2"/>
    <property type="gene ID" value="AT4G17990"/>
</dbReference>
<dbReference type="KEGG" id="ath:AT4G17990"/>
<dbReference type="Araport" id="AT4G17990"/>
<dbReference type="TAIR" id="AT4G17990"/>
<dbReference type="HOGENOM" id="CLU_1542177_0_0_1"/>
<dbReference type="InParanoid" id="O49698"/>
<dbReference type="OMA" id="KMEHEFM"/>
<dbReference type="OrthoDB" id="1107319at2759"/>
<dbReference type="PRO" id="PR:O49698"/>
<dbReference type="Proteomes" id="UP000006548">
    <property type="component" value="Chromosome 4"/>
</dbReference>
<dbReference type="ExpressionAtlas" id="O49698">
    <property type="expression patterns" value="baseline and differential"/>
</dbReference>
<dbReference type="InterPro" id="IPR006462">
    <property type="entry name" value="MS5"/>
</dbReference>
<dbReference type="PANTHER" id="PTHR31260:SF65">
    <property type="entry name" value="BNAANNG28850D PROTEIN"/>
    <property type="match status" value="1"/>
</dbReference>
<dbReference type="PANTHER" id="PTHR31260">
    <property type="entry name" value="CYSTATIN/MONELLIN SUPERFAMILY PROTEIN"/>
    <property type="match status" value="1"/>
</dbReference>
<dbReference type="Pfam" id="PF04776">
    <property type="entry name" value="protein_MS5"/>
    <property type="match status" value="1"/>
</dbReference>
<protein>
    <recommendedName>
        <fullName>UPF0725 protein At4g17990</fullName>
    </recommendedName>
</protein>
<accession>O49698</accession>
<accession>F4JQ18</accession>
<reference key="1">
    <citation type="journal article" date="1999" name="Nature">
        <title>Sequence and analysis of chromosome 4 of the plant Arabidopsis thaliana.</title>
        <authorList>
            <person name="Mayer K.F.X."/>
            <person name="Schueller C."/>
            <person name="Wambutt R."/>
            <person name="Murphy G."/>
            <person name="Volckaert G."/>
            <person name="Pohl T."/>
            <person name="Duesterhoeft A."/>
            <person name="Stiekema W."/>
            <person name="Entian K.-D."/>
            <person name="Terryn N."/>
            <person name="Harris B."/>
            <person name="Ansorge W."/>
            <person name="Brandt P."/>
            <person name="Grivell L.A."/>
            <person name="Rieger M."/>
            <person name="Weichselgartner M."/>
            <person name="de Simone V."/>
            <person name="Obermaier B."/>
            <person name="Mache R."/>
            <person name="Mueller M."/>
            <person name="Kreis M."/>
            <person name="Delseny M."/>
            <person name="Puigdomenech P."/>
            <person name="Watson M."/>
            <person name="Schmidtheini T."/>
            <person name="Reichert B."/>
            <person name="Portetelle D."/>
            <person name="Perez-Alonso M."/>
            <person name="Boutry M."/>
            <person name="Bancroft I."/>
            <person name="Vos P."/>
            <person name="Hoheisel J."/>
            <person name="Zimmermann W."/>
            <person name="Wedler H."/>
            <person name="Ridley P."/>
            <person name="Langham S.-A."/>
            <person name="McCullagh B."/>
            <person name="Bilham L."/>
            <person name="Robben J."/>
            <person name="van der Schueren J."/>
            <person name="Grymonprez B."/>
            <person name="Chuang Y.-J."/>
            <person name="Vandenbussche F."/>
            <person name="Braeken M."/>
            <person name="Weltjens I."/>
            <person name="Voet M."/>
            <person name="Bastiaens I."/>
            <person name="Aert R."/>
            <person name="Defoor E."/>
            <person name="Weitzenegger T."/>
            <person name="Bothe G."/>
            <person name="Ramsperger U."/>
            <person name="Hilbert H."/>
            <person name="Braun M."/>
            <person name="Holzer E."/>
            <person name="Brandt A."/>
            <person name="Peters S."/>
            <person name="van Staveren M."/>
            <person name="Dirkse W."/>
            <person name="Mooijman P."/>
            <person name="Klein Lankhorst R."/>
            <person name="Rose M."/>
            <person name="Hauf J."/>
            <person name="Koetter P."/>
            <person name="Berneiser S."/>
            <person name="Hempel S."/>
            <person name="Feldpausch M."/>
            <person name="Lamberth S."/>
            <person name="Van den Daele H."/>
            <person name="De Keyser A."/>
            <person name="Buysshaert C."/>
            <person name="Gielen J."/>
            <person name="Villarroel R."/>
            <person name="De Clercq R."/>
            <person name="van Montagu M."/>
            <person name="Rogers J."/>
            <person name="Cronin A."/>
            <person name="Quail M.A."/>
            <person name="Bray-Allen S."/>
            <person name="Clark L."/>
            <person name="Doggett J."/>
            <person name="Hall S."/>
            <person name="Kay M."/>
            <person name="Lennard N."/>
            <person name="McLay K."/>
            <person name="Mayes R."/>
            <person name="Pettett A."/>
            <person name="Rajandream M.A."/>
            <person name="Lyne M."/>
            <person name="Benes V."/>
            <person name="Rechmann S."/>
            <person name="Borkova D."/>
            <person name="Bloecker H."/>
            <person name="Scharfe M."/>
            <person name="Grimm M."/>
            <person name="Loehnert T.-H."/>
            <person name="Dose S."/>
            <person name="de Haan M."/>
            <person name="Maarse A.C."/>
            <person name="Schaefer M."/>
            <person name="Mueller-Auer S."/>
            <person name="Gabel C."/>
            <person name="Fuchs M."/>
            <person name="Fartmann B."/>
            <person name="Granderath K."/>
            <person name="Dauner D."/>
            <person name="Herzl A."/>
            <person name="Neumann S."/>
            <person name="Argiriou A."/>
            <person name="Vitale D."/>
            <person name="Liguori R."/>
            <person name="Piravandi E."/>
            <person name="Massenet O."/>
            <person name="Quigley F."/>
            <person name="Clabauld G."/>
            <person name="Muendlein A."/>
            <person name="Felber R."/>
            <person name="Schnabl S."/>
            <person name="Hiller R."/>
            <person name="Schmidt W."/>
            <person name="Lecharny A."/>
            <person name="Aubourg S."/>
            <person name="Chefdor F."/>
            <person name="Cooke R."/>
            <person name="Berger C."/>
            <person name="Monfort A."/>
            <person name="Casacuberta E."/>
            <person name="Gibbons T."/>
            <person name="Weber N."/>
            <person name="Vandenbol M."/>
            <person name="Bargues M."/>
            <person name="Terol J."/>
            <person name="Torres A."/>
            <person name="Perez-Perez A."/>
            <person name="Purnelle B."/>
            <person name="Bent E."/>
            <person name="Johnson S."/>
            <person name="Tacon D."/>
            <person name="Jesse T."/>
            <person name="Heijnen L."/>
            <person name="Schwarz S."/>
            <person name="Scholler P."/>
            <person name="Heber S."/>
            <person name="Francs P."/>
            <person name="Bielke C."/>
            <person name="Frishman D."/>
            <person name="Haase D."/>
            <person name="Lemcke K."/>
            <person name="Mewes H.-W."/>
            <person name="Stocker S."/>
            <person name="Zaccaria P."/>
            <person name="Bevan M."/>
            <person name="Wilson R.K."/>
            <person name="de la Bastide M."/>
            <person name="Habermann K."/>
            <person name="Parnell L."/>
            <person name="Dedhia N."/>
            <person name="Gnoj L."/>
            <person name="Schutz K."/>
            <person name="Huang E."/>
            <person name="Spiegel L."/>
            <person name="Sekhon M."/>
            <person name="Murray J."/>
            <person name="Sheet P."/>
            <person name="Cordes M."/>
            <person name="Abu-Threideh J."/>
            <person name="Stoneking T."/>
            <person name="Kalicki J."/>
            <person name="Graves T."/>
            <person name="Harmon G."/>
            <person name="Edwards J."/>
            <person name="Latreille P."/>
            <person name="Courtney L."/>
            <person name="Cloud J."/>
            <person name="Abbott A."/>
            <person name="Scott K."/>
            <person name="Johnson D."/>
            <person name="Minx P."/>
            <person name="Bentley D."/>
            <person name="Fulton B."/>
            <person name="Miller N."/>
            <person name="Greco T."/>
            <person name="Kemp K."/>
            <person name="Kramer J."/>
            <person name="Fulton L."/>
            <person name="Mardis E."/>
            <person name="Dante M."/>
            <person name="Pepin K."/>
            <person name="Hillier L.W."/>
            <person name="Nelson J."/>
            <person name="Spieth J."/>
            <person name="Ryan E."/>
            <person name="Andrews S."/>
            <person name="Geisel C."/>
            <person name="Layman D."/>
            <person name="Du H."/>
            <person name="Ali J."/>
            <person name="Berghoff A."/>
            <person name="Jones K."/>
            <person name="Drone K."/>
            <person name="Cotton M."/>
            <person name="Joshu C."/>
            <person name="Antonoiu B."/>
            <person name="Zidanic M."/>
            <person name="Strong C."/>
            <person name="Sun H."/>
            <person name="Lamar B."/>
            <person name="Yordan C."/>
            <person name="Ma P."/>
            <person name="Zhong J."/>
            <person name="Preston R."/>
            <person name="Vil D."/>
            <person name="Shekher M."/>
            <person name="Matero A."/>
            <person name="Shah R."/>
            <person name="Swaby I.K."/>
            <person name="O'Shaughnessy A."/>
            <person name="Rodriguez M."/>
            <person name="Hoffman J."/>
            <person name="Till S."/>
            <person name="Granat S."/>
            <person name="Shohdy N."/>
            <person name="Hasegawa A."/>
            <person name="Hameed A."/>
            <person name="Lodhi M."/>
            <person name="Johnson A."/>
            <person name="Chen E."/>
            <person name="Marra M.A."/>
            <person name="Martienssen R."/>
            <person name="McCombie W.R."/>
        </authorList>
    </citation>
    <scope>NUCLEOTIDE SEQUENCE [LARGE SCALE GENOMIC DNA]</scope>
    <source>
        <strain>cv. Columbia</strain>
    </source>
</reference>
<reference key="2">
    <citation type="journal article" date="2017" name="Plant J.">
        <title>Araport11: a complete reannotation of the Arabidopsis thaliana reference genome.</title>
        <authorList>
            <person name="Cheng C.Y."/>
            <person name="Krishnakumar V."/>
            <person name="Chan A.P."/>
            <person name="Thibaud-Nissen F."/>
            <person name="Schobel S."/>
            <person name="Town C.D."/>
        </authorList>
    </citation>
    <scope>GENOME REANNOTATION</scope>
    <source>
        <strain>cv. Columbia</strain>
    </source>
</reference>
<evidence type="ECO:0000305" key="1"/>
<sequence length="233" mass="26350">MEDDEKCREFWSRVAESQGFDVEHLMDDKPKSCLLDYQNSDFDTEVFLNAKLGIHKYNMLQGTNLQLSCIEKCNSRITTVCIGYYITLVAKDPSAGGSLVTFQTKVVHEDYSKINTLTVYLARLKSQPPPDEEIGGAKTGLGSSILGTCIHPCKSVSSKSVETEENVKQPNERLKARNAVFYIRYRYYPNKGRAPKGNGHKPPRDRIAIIKRTMDIQGLLTLEFDTRYAKTLL</sequence>
<keyword id="KW-1185">Reference proteome</keyword>
<gene>
    <name type="ordered locus">At4g17990</name>
    <name type="ORF">T6K21.170</name>
</gene>
<comment type="similarity">
    <text evidence="1">Belongs to the UPF0725 (EMB2204) family.</text>
</comment>
<comment type="sequence caution" evidence="1">
    <conflict type="erroneous gene model prediction">
        <sequence resource="EMBL-CDS" id="AEE83975"/>
    </conflict>
</comment>
<comment type="sequence caution" evidence="1">
    <conflict type="erroneous gene model prediction">
        <sequence resource="EMBL-CDS" id="CAA17142"/>
    </conflict>
</comment>
<comment type="sequence caution" evidence="1">
    <conflict type="erroneous gene model prediction">
        <sequence resource="EMBL-CDS" id="CAB78801"/>
    </conflict>
</comment>
<proteinExistence type="inferred from homology"/>
<name>Y4179_ARATH</name>
<feature type="chain" id="PRO_0000363128" description="UPF0725 protein At4g17990">
    <location>
        <begin position="1"/>
        <end position="233"/>
    </location>
</feature>
<organism>
    <name type="scientific">Arabidopsis thaliana</name>
    <name type="common">Mouse-ear cress</name>
    <dbReference type="NCBI Taxonomy" id="3702"/>
    <lineage>
        <taxon>Eukaryota</taxon>
        <taxon>Viridiplantae</taxon>
        <taxon>Streptophyta</taxon>
        <taxon>Embryophyta</taxon>
        <taxon>Tracheophyta</taxon>
        <taxon>Spermatophyta</taxon>
        <taxon>Magnoliopsida</taxon>
        <taxon>eudicotyledons</taxon>
        <taxon>Gunneridae</taxon>
        <taxon>Pentapetalae</taxon>
        <taxon>rosids</taxon>
        <taxon>malvids</taxon>
        <taxon>Brassicales</taxon>
        <taxon>Brassicaceae</taxon>
        <taxon>Camelineae</taxon>
        <taxon>Arabidopsis</taxon>
    </lineage>
</organism>